<keyword id="KW-0963">Cytoplasm</keyword>
<keyword id="KW-0251">Elongation factor</keyword>
<keyword id="KW-0342">GTP-binding</keyword>
<keyword id="KW-0378">Hydrolase</keyword>
<keyword id="KW-0460">Magnesium</keyword>
<keyword id="KW-0479">Metal-binding</keyword>
<keyword id="KW-0547">Nucleotide-binding</keyword>
<keyword id="KW-0648">Protein biosynthesis</keyword>
<sequence length="394" mass="43126">MSKEKFERTKPHVNVGTIGHVDHGKTTLTAAICTVLAKVYGGKARDFASIDNAPEERERGITINTSHVEYDTPNRHYAHVDCPGHADYVKNMITGAAQMDGGILVVAATDGPMPQTREHILLGRQVGIPYIIVFMNKCDMVDDEELLELVEMEVRELLSEYDFPGDDLPVIQGSALGALNGEAQWEAKIVELAEALDTYIPEPERAVDMAFLMPIEDVFSIQGRGTVVTGRIERGILKVGDEVAIVGIKETVKTTCTGVEMFRKLLDEGRAGENVGALLRGTKREEVERGQVLAKPGSITPHTKFESEVYVLSKDEGGRHTPFFKGYRPQFYFRTTDVTGSIELPEGVEMVMPGDNVKMVVDLIAPIAMDEGLRFAIREGGRTVGAGVVAKIIA</sequence>
<organism>
    <name type="scientific">Vibrio cholerae serotype O1 (strain ATCC 39541 / Classical Ogawa 395 / O395)</name>
    <dbReference type="NCBI Taxonomy" id="345073"/>
    <lineage>
        <taxon>Bacteria</taxon>
        <taxon>Pseudomonadati</taxon>
        <taxon>Pseudomonadota</taxon>
        <taxon>Gammaproteobacteria</taxon>
        <taxon>Vibrionales</taxon>
        <taxon>Vibrionaceae</taxon>
        <taxon>Vibrio</taxon>
    </lineage>
</organism>
<feature type="chain" id="PRO_0000337567" description="Elongation factor Tu">
    <location>
        <begin position="1"/>
        <end position="394"/>
    </location>
</feature>
<feature type="domain" description="tr-type G">
    <location>
        <begin position="10"/>
        <end position="204"/>
    </location>
</feature>
<feature type="region of interest" description="G1" evidence="1">
    <location>
        <begin position="19"/>
        <end position="26"/>
    </location>
</feature>
<feature type="region of interest" description="G2" evidence="1">
    <location>
        <begin position="60"/>
        <end position="64"/>
    </location>
</feature>
<feature type="region of interest" description="G3" evidence="1">
    <location>
        <begin position="81"/>
        <end position="84"/>
    </location>
</feature>
<feature type="region of interest" description="G4" evidence="1">
    <location>
        <begin position="136"/>
        <end position="139"/>
    </location>
</feature>
<feature type="region of interest" description="G5" evidence="1">
    <location>
        <begin position="174"/>
        <end position="176"/>
    </location>
</feature>
<feature type="binding site" evidence="2">
    <location>
        <begin position="19"/>
        <end position="26"/>
    </location>
    <ligand>
        <name>GTP</name>
        <dbReference type="ChEBI" id="CHEBI:37565"/>
    </ligand>
</feature>
<feature type="binding site" evidence="2">
    <location>
        <position position="26"/>
    </location>
    <ligand>
        <name>Mg(2+)</name>
        <dbReference type="ChEBI" id="CHEBI:18420"/>
    </ligand>
</feature>
<feature type="binding site" evidence="2">
    <location>
        <begin position="81"/>
        <end position="85"/>
    </location>
    <ligand>
        <name>GTP</name>
        <dbReference type="ChEBI" id="CHEBI:37565"/>
    </ligand>
</feature>
<feature type="binding site" evidence="2">
    <location>
        <begin position="136"/>
        <end position="139"/>
    </location>
    <ligand>
        <name>GTP</name>
        <dbReference type="ChEBI" id="CHEBI:37565"/>
    </ligand>
</feature>
<evidence type="ECO:0000250" key="1"/>
<evidence type="ECO:0000255" key="2">
    <source>
        <dbReference type="HAMAP-Rule" id="MF_00118"/>
    </source>
</evidence>
<gene>
    <name evidence="2" type="primary">tuf1</name>
    <name type="synonym">tufA</name>
    <name type="ordered locus">VC0395_A2723</name>
    <name type="ordered locus">VC395_0364</name>
</gene>
<gene>
    <name evidence="2" type="primary">tuf2</name>
    <name type="synonym">tufB</name>
    <name type="ordered locus">VC0395_A2774</name>
    <name type="ordered locus">VC395_0405</name>
</gene>
<protein>
    <recommendedName>
        <fullName evidence="2">Elongation factor Tu</fullName>
        <shortName evidence="2">EF-Tu</shortName>
        <ecNumber evidence="2">3.6.5.3</ecNumber>
    </recommendedName>
</protein>
<proteinExistence type="inferred from homology"/>
<comment type="function">
    <text evidence="2">GTP hydrolase that promotes the GTP-dependent binding of aminoacyl-tRNA to the A-site of ribosomes during protein biosynthesis.</text>
</comment>
<comment type="catalytic activity">
    <reaction evidence="2">
        <text>GTP + H2O = GDP + phosphate + H(+)</text>
        <dbReference type="Rhea" id="RHEA:19669"/>
        <dbReference type="ChEBI" id="CHEBI:15377"/>
        <dbReference type="ChEBI" id="CHEBI:15378"/>
        <dbReference type="ChEBI" id="CHEBI:37565"/>
        <dbReference type="ChEBI" id="CHEBI:43474"/>
        <dbReference type="ChEBI" id="CHEBI:58189"/>
        <dbReference type="EC" id="3.6.5.3"/>
    </reaction>
    <physiologicalReaction direction="left-to-right" evidence="2">
        <dbReference type="Rhea" id="RHEA:19670"/>
    </physiologicalReaction>
</comment>
<comment type="subunit">
    <text evidence="2">Monomer.</text>
</comment>
<comment type="subcellular location">
    <subcellularLocation>
        <location evidence="2">Cytoplasm</location>
    </subcellularLocation>
</comment>
<comment type="similarity">
    <text evidence="2">Belongs to the TRAFAC class translation factor GTPase superfamily. Classic translation factor GTPase family. EF-Tu/EF-1A subfamily.</text>
</comment>
<reference key="1">
    <citation type="submission" date="2007-03" db="EMBL/GenBank/DDBJ databases">
        <authorList>
            <person name="Heidelberg J."/>
        </authorList>
    </citation>
    <scope>NUCLEOTIDE SEQUENCE [LARGE SCALE GENOMIC DNA]</scope>
    <source>
        <strain>ATCC 39541 / Classical Ogawa 395 / O395</strain>
    </source>
</reference>
<reference key="2">
    <citation type="journal article" date="2008" name="PLoS ONE">
        <title>A recalibrated molecular clock and independent origins for the cholera pandemic clones.</title>
        <authorList>
            <person name="Feng L."/>
            <person name="Reeves P.R."/>
            <person name="Lan R."/>
            <person name="Ren Y."/>
            <person name="Gao C."/>
            <person name="Zhou Z."/>
            <person name="Ren Y."/>
            <person name="Cheng J."/>
            <person name="Wang W."/>
            <person name="Wang J."/>
            <person name="Qian W."/>
            <person name="Li D."/>
            <person name="Wang L."/>
        </authorList>
    </citation>
    <scope>NUCLEOTIDE SEQUENCE [LARGE SCALE GENOMIC DNA]</scope>
    <source>
        <strain>ATCC 39541 / Classical Ogawa 395 / O395</strain>
    </source>
</reference>
<name>EFTU_VIBC3</name>
<dbReference type="EC" id="3.6.5.3" evidence="2"/>
<dbReference type="EMBL" id="CP000627">
    <property type="protein sequence ID" value="ABQ21011.1"/>
    <property type="molecule type" value="Genomic_DNA"/>
</dbReference>
<dbReference type="EMBL" id="CP000627">
    <property type="protein sequence ID" value="ABQ21384.1"/>
    <property type="molecule type" value="Genomic_DNA"/>
</dbReference>
<dbReference type="EMBL" id="CP001235">
    <property type="protein sequence ID" value="ACP08387.1"/>
    <property type="molecule type" value="Genomic_DNA"/>
</dbReference>
<dbReference type="EMBL" id="CP001235">
    <property type="protein sequence ID" value="ACP08428.1"/>
    <property type="molecule type" value="Genomic_DNA"/>
</dbReference>
<dbReference type="SMR" id="A5F3K0"/>
<dbReference type="KEGG" id="vco:VC0395_A2723"/>
<dbReference type="KEGG" id="vco:VC0395_A2774"/>
<dbReference type="KEGG" id="vcr:VC395_0364"/>
<dbReference type="KEGG" id="vcr:VC395_0405"/>
<dbReference type="PATRIC" id="fig|345073.21.peg.352"/>
<dbReference type="eggNOG" id="COG0050">
    <property type="taxonomic scope" value="Bacteria"/>
</dbReference>
<dbReference type="HOGENOM" id="CLU_007265_0_0_6"/>
<dbReference type="OrthoDB" id="9803139at2"/>
<dbReference type="Proteomes" id="UP000000249">
    <property type="component" value="Chromosome 2"/>
</dbReference>
<dbReference type="GO" id="GO:0005829">
    <property type="term" value="C:cytosol"/>
    <property type="evidence" value="ECO:0007669"/>
    <property type="project" value="TreeGrafter"/>
</dbReference>
<dbReference type="GO" id="GO:0005525">
    <property type="term" value="F:GTP binding"/>
    <property type="evidence" value="ECO:0007669"/>
    <property type="project" value="UniProtKB-UniRule"/>
</dbReference>
<dbReference type="GO" id="GO:0003924">
    <property type="term" value="F:GTPase activity"/>
    <property type="evidence" value="ECO:0007669"/>
    <property type="project" value="InterPro"/>
</dbReference>
<dbReference type="GO" id="GO:0097216">
    <property type="term" value="F:guanosine tetraphosphate binding"/>
    <property type="evidence" value="ECO:0007669"/>
    <property type="project" value="UniProtKB-ARBA"/>
</dbReference>
<dbReference type="GO" id="GO:0003746">
    <property type="term" value="F:translation elongation factor activity"/>
    <property type="evidence" value="ECO:0007669"/>
    <property type="project" value="UniProtKB-UniRule"/>
</dbReference>
<dbReference type="CDD" id="cd01884">
    <property type="entry name" value="EF_Tu"/>
    <property type="match status" value="1"/>
</dbReference>
<dbReference type="CDD" id="cd03697">
    <property type="entry name" value="EFTU_II"/>
    <property type="match status" value="1"/>
</dbReference>
<dbReference type="CDD" id="cd03707">
    <property type="entry name" value="EFTU_III"/>
    <property type="match status" value="1"/>
</dbReference>
<dbReference type="FunFam" id="2.40.30.10:FF:000001">
    <property type="entry name" value="Elongation factor Tu"/>
    <property type="match status" value="1"/>
</dbReference>
<dbReference type="FunFam" id="3.40.50.300:FF:000003">
    <property type="entry name" value="Elongation factor Tu"/>
    <property type="match status" value="1"/>
</dbReference>
<dbReference type="Gene3D" id="3.40.50.300">
    <property type="entry name" value="P-loop containing nucleotide triphosphate hydrolases"/>
    <property type="match status" value="1"/>
</dbReference>
<dbReference type="Gene3D" id="2.40.30.10">
    <property type="entry name" value="Translation factors"/>
    <property type="match status" value="2"/>
</dbReference>
<dbReference type="HAMAP" id="MF_00118_B">
    <property type="entry name" value="EF_Tu_B"/>
    <property type="match status" value="1"/>
</dbReference>
<dbReference type="InterPro" id="IPR041709">
    <property type="entry name" value="EF-Tu_GTP-bd"/>
</dbReference>
<dbReference type="InterPro" id="IPR050055">
    <property type="entry name" value="EF-Tu_GTPase"/>
</dbReference>
<dbReference type="InterPro" id="IPR004161">
    <property type="entry name" value="EFTu-like_2"/>
</dbReference>
<dbReference type="InterPro" id="IPR033720">
    <property type="entry name" value="EFTU_2"/>
</dbReference>
<dbReference type="InterPro" id="IPR031157">
    <property type="entry name" value="G_TR_CS"/>
</dbReference>
<dbReference type="InterPro" id="IPR027417">
    <property type="entry name" value="P-loop_NTPase"/>
</dbReference>
<dbReference type="InterPro" id="IPR005225">
    <property type="entry name" value="Small_GTP-bd"/>
</dbReference>
<dbReference type="InterPro" id="IPR000795">
    <property type="entry name" value="T_Tr_GTP-bd_dom"/>
</dbReference>
<dbReference type="InterPro" id="IPR009000">
    <property type="entry name" value="Transl_B-barrel_sf"/>
</dbReference>
<dbReference type="InterPro" id="IPR009001">
    <property type="entry name" value="Transl_elong_EF1A/Init_IF2_C"/>
</dbReference>
<dbReference type="InterPro" id="IPR004541">
    <property type="entry name" value="Transl_elong_EFTu/EF1A_bac/org"/>
</dbReference>
<dbReference type="InterPro" id="IPR004160">
    <property type="entry name" value="Transl_elong_EFTu/EF1A_C"/>
</dbReference>
<dbReference type="NCBIfam" id="TIGR00485">
    <property type="entry name" value="EF-Tu"/>
    <property type="match status" value="1"/>
</dbReference>
<dbReference type="NCBIfam" id="NF000766">
    <property type="entry name" value="PRK00049.1"/>
    <property type="match status" value="1"/>
</dbReference>
<dbReference type="NCBIfam" id="NF009372">
    <property type="entry name" value="PRK12735.1"/>
    <property type="match status" value="1"/>
</dbReference>
<dbReference type="NCBIfam" id="NF009373">
    <property type="entry name" value="PRK12736.1"/>
    <property type="match status" value="1"/>
</dbReference>
<dbReference type="NCBIfam" id="TIGR00231">
    <property type="entry name" value="small_GTP"/>
    <property type="match status" value="1"/>
</dbReference>
<dbReference type="PANTHER" id="PTHR43721:SF22">
    <property type="entry name" value="ELONGATION FACTOR TU, MITOCHONDRIAL"/>
    <property type="match status" value="1"/>
</dbReference>
<dbReference type="PANTHER" id="PTHR43721">
    <property type="entry name" value="ELONGATION FACTOR TU-RELATED"/>
    <property type="match status" value="1"/>
</dbReference>
<dbReference type="Pfam" id="PF00009">
    <property type="entry name" value="GTP_EFTU"/>
    <property type="match status" value="1"/>
</dbReference>
<dbReference type="Pfam" id="PF03144">
    <property type="entry name" value="GTP_EFTU_D2"/>
    <property type="match status" value="1"/>
</dbReference>
<dbReference type="Pfam" id="PF03143">
    <property type="entry name" value="GTP_EFTU_D3"/>
    <property type="match status" value="1"/>
</dbReference>
<dbReference type="PRINTS" id="PR00315">
    <property type="entry name" value="ELONGATNFCT"/>
</dbReference>
<dbReference type="SUPFAM" id="SSF50465">
    <property type="entry name" value="EF-Tu/eEF-1alpha/eIF2-gamma C-terminal domain"/>
    <property type="match status" value="1"/>
</dbReference>
<dbReference type="SUPFAM" id="SSF52540">
    <property type="entry name" value="P-loop containing nucleoside triphosphate hydrolases"/>
    <property type="match status" value="1"/>
</dbReference>
<dbReference type="SUPFAM" id="SSF50447">
    <property type="entry name" value="Translation proteins"/>
    <property type="match status" value="1"/>
</dbReference>
<dbReference type="PROSITE" id="PS00301">
    <property type="entry name" value="G_TR_1"/>
    <property type="match status" value="1"/>
</dbReference>
<dbReference type="PROSITE" id="PS51722">
    <property type="entry name" value="G_TR_2"/>
    <property type="match status" value="1"/>
</dbReference>
<accession>A5F3K0</accession>
<accession>C3M3X9</accession>